<accession>P24742</accession>
<proteinExistence type="evidence at protein level"/>
<dbReference type="PIR" id="C39558">
    <property type="entry name" value="C39558"/>
</dbReference>
<dbReference type="SMR" id="P24742"/>
<dbReference type="GO" id="GO:0005576">
    <property type="term" value="C:extracellular region"/>
    <property type="evidence" value="ECO:0007669"/>
    <property type="project" value="UniProtKB-SubCell"/>
</dbReference>
<dbReference type="GO" id="GO:0090729">
    <property type="term" value="F:toxin activity"/>
    <property type="evidence" value="ECO:0007669"/>
    <property type="project" value="UniProtKB-KW"/>
</dbReference>
<dbReference type="Gene3D" id="2.10.60.10">
    <property type="entry name" value="CD59"/>
    <property type="match status" value="1"/>
</dbReference>
<dbReference type="InterPro" id="IPR045860">
    <property type="entry name" value="Snake_toxin-like_sf"/>
</dbReference>
<dbReference type="InterPro" id="IPR054131">
    <property type="entry name" value="Toxin_cobra-type"/>
</dbReference>
<dbReference type="Pfam" id="PF21947">
    <property type="entry name" value="Toxin_cobra-type"/>
    <property type="match status" value="1"/>
</dbReference>
<dbReference type="SUPFAM" id="SSF57302">
    <property type="entry name" value="Snake toxin-like"/>
    <property type="match status" value="1"/>
</dbReference>
<protein>
    <recommendedName>
        <fullName>Maticotoxin A</fullName>
    </recommendedName>
    <alternativeName>
        <fullName>Three-finger toxin</fullName>
        <shortName>3FTx</shortName>
    </alternativeName>
</protein>
<comment type="subcellular location">
    <subcellularLocation>
        <location evidence="2">Secreted</location>
    </subcellularLocation>
</comment>
<comment type="tissue specificity">
    <text evidence="3">Expressed by the venom gland.</text>
</comment>
<comment type="similarity">
    <text evidence="3">Belongs to the three-finger toxin family. Short-chain subfamily.</text>
</comment>
<feature type="chain" id="PRO_0000093524" description="Maticotoxin A" evidence="2">
    <location>
        <begin position="1"/>
        <end position="41" status="greater than"/>
    </location>
</feature>
<feature type="disulfide bond" evidence="1">
    <location>
        <begin position="3"/>
        <end position="22"/>
    </location>
</feature>
<feature type="disulfide bond" evidence="1">
    <location>
        <begin position="15"/>
        <end position="39"/>
    </location>
</feature>
<feature type="non-terminal residue">
    <location>
        <position position="41"/>
    </location>
</feature>
<name>3SXA_CALBG</name>
<reference key="1">
    <citation type="journal article" date="1991" name="Toxicon">
        <title>Studies on the venom components of the long-glanded coral snake, Maticora bivirgata.</title>
        <authorList>
            <person name="Takasaki C."/>
            <person name="Yoshida H."/>
            <person name="Shimazu T."/>
            <person name="Teruuchi T."/>
            <person name="Toriba M."/>
            <person name="Tamiya N."/>
        </authorList>
    </citation>
    <scope>PROTEIN SEQUENCE</scope>
    <scope>SUBCELLULAR LOCATION</scope>
    <source>
        <tissue>Venom</tissue>
    </source>
</reference>
<evidence type="ECO:0000250" key="1">
    <source>
        <dbReference type="UniProtKB" id="P60301"/>
    </source>
</evidence>
<evidence type="ECO:0000269" key="2">
    <source>
    </source>
</evidence>
<evidence type="ECO:0000305" key="3"/>
<sequence length="41" mass="4677">LICYNTPFKDISKTCAEGENLCYYGKKDAVWNLYPIRGCAD</sequence>
<organism>
    <name type="scientific">Calliophis bivirgatus</name>
    <name type="common">Blue Malaysian coral snake</name>
    <name type="synonym">Maticora bivirgata</name>
    <dbReference type="NCBI Taxonomy" id="8633"/>
    <lineage>
        <taxon>Eukaryota</taxon>
        <taxon>Metazoa</taxon>
        <taxon>Chordata</taxon>
        <taxon>Craniata</taxon>
        <taxon>Vertebrata</taxon>
        <taxon>Euteleostomi</taxon>
        <taxon>Lepidosauria</taxon>
        <taxon>Squamata</taxon>
        <taxon>Bifurcata</taxon>
        <taxon>Unidentata</taxon>
        <taxon>Episquamata</taxon>
        <taxon>Toxicofera</taxon>
        <taxon>Serpentes</taxon>
        <taxon>Colubroidea</taxon>
        <taxon>Elapidae</taxon>
        <taxon>Elapinae</taxon>
        <taxon>Calliophis</taxon>
    </lineage>
</organism>
<keyword id="KW-0903">Direct protein sequencing</keyword>
<keyword id="KW-1015">Disulfide bond</keyword>
<keyword id="KW-0964">Secreted</keyword>
<keyword id="KW-0800">Toxin</keyword>